<accession>Q86TL0</accession>
<accession>Q969K0</accession>
<evidence type="ECO:0000250" key="1">
    <source>
        <dbReference type="UniProtKB" id="Q8BGV9"/>
    </source>
</evidence>
<evidence type="ECO:0000250" key="2">
    <source>
        <dbReference type="UniProtKB" id="Q9Y4P1"/>
    </source>
</evidence>
<evidence type="ECO:0000256" key="3">
    <source>
        <dbReference type="SAM" id="MobiDB-lite"/>
    </source>
</evidence>
<evidence type="ECO:0000269" key="4">
    <source>
    </source>
</evidence>
<evidence type="ECO:0000269" key="5">
    <source>
    </source>
</evidence>
<evidence type="ECO:0000269" key="6">
    <source>
    </source>
</evidence>
<evidence type="ECO:0000269" key="7">
    <source>
    </source>
</evidence>
<evidence type="ECO:0000269" key="8">
    <source>
    </source>
</evidence>
<evidence type="ECO:0000269" key="9">
    <source>
    </source>
</evidence>
<evidence type="ECO:0000269" key="10">
    <source>
    </source>
</evidence>
<evidence type="ECO:0000269" key="11">
    <source>
    </source>
</evidence>
<evidence type="ECO:0000269" key="12">
    <source>
    </source>
</evidence>
<evidence type="ECO:0000303" key="13">
    <source>
    </source>
</evidence>
<evidence type="ECO:0000303" key="14">
    <source>
    </source>
</evidence>
<evidence type="ECO:0000303" key="15">
    <source>
    </source>
</evidence>
<evidence type="ECO:0000303" key="16">
    <source>
    </source>
</evidence>
<evidence type="ECO:0000305" key="17"/>
<evidence type="ECO:0000305" key="18">
    <source>
    </source>
</evidence>
<evidence type="ECO:0000312" key="19">
    <source>
        <dbReference type="HGNC" id="HGNC:20789"/>
    </source>
</evidence>
<evidence type="ECO:0007744" key="20">
    <source>
    </source>
</evidence>
<proteinExistence type="evidence at protein level"/>
<organism>
    <name type="scientific">Homo sapiens</name>
    <name type="common">Human</name>
    <dbReference type="NCBI Taxonomy" id="9606"/>
    <lineage>
        <taxon>Eukaryota</taxon>
        <taxon>Metazoa</taxon>
        <taxon>Chordata</taxon>
        <taxon>Craniata</taxon>
        <taxon>Vertebrata</taxon>
        <taxon>Euteleostomi</taxon>
        <taxon>Mammalia</taxon>
        <taxon>Eutheria</taxon>
        <taxon>Euarchontoglires</taxon>
        <taxon>Primates</taxon>
        <taxon>Haplorrhini</taxon>
        <taxon>Catarrhini</taxon>
        <taxon>Hominidae</taxon>
        <taxon>Homo</taxon>
    </lineage>
</organism>
<keyword id="KW-0025">Alternative splicing</keyword>
<keyword id="KW-0053">Apoptosis</keyword>
<keyword id="KW-0072">Autophagy</keyword>
<keyword id="KW-0963">Cytoplasm</keyword>
<keyword id="KW-0378">Hydrolase</keyword>
<keyword id="KW-0496">Mitochondrion</keyword>
<keyword id="KW-0597">Phosphoprotein</keyword>
<keyword id="KW-0645">Protease</keyword>
<keyword id="KW-0653">Protein transport</keyword>
<keyword id="KW-1267">Proteomics identification</keyword>
<keyword id="KW-1185">Reference proteome</keyword>
<keyword id="KW-0788">Thiol protease</keyword>
<keyword id="KW-0813">Transport</keyword>
<keyword id="KW-0833">Ubl conjugation pathway</keyword>
<protein>
    <recommendedName>
        <fullName evidence="17">Cysteine protease ATG4D</fullName>
        <ecNumber evidence="6">3.4.22.-</ecNumber>
    </recommendedName>
    <alternativeName>
        <fullName>AUT-like 4 cysteine endopeptidase</fullName>
    </alternativeName>
    <alternativeName>
        <fullName evidence="13">Autophagy-related cysteine endopeptidase 4</fullName>
        <shortName evidence="13">Autophagin-4</shortName>
    </alternativeName>
    <alternativeName>
        <fullName evidence="17">Autophagy-related protein 4 homolog D</fullName>
        <shortName evidence="16">HsAPG4D</shortName>
    </alternativeName>
    <component>
        <recommendedName>
            <fullName evidence="17">Cysteine protease ATG4D, mitochondrial</fullName>
        </recommendedName>
    </component>
</protein>
<name>ATG4D_HUMAN</name>
<feature type="chain" id="PRO_0000215853" description="Cysteine protease ATG4D">
    <location>
        <begin position="1"/>
        <end position="474"/>
    </location>
</feature>
<feature type="chain" id="PRO_0000423408" description="Cysteine protease ATG4D, mitochondrial">
    <location>
        <begin position="64"/>
        <end position="474"/>
    </location>
</feature>
<feature type="region of interest" description="Disordered" evidence="3">
    <location>
        <begin position="1"/>
        <end position="60"/>
    </location>
</feature>
<feature type="region of interest" description="Cryptic mitochondrial signal peptide">
    <location>
        <begin position="64"/>
        <end position="103"/>
    </location>
</feature>
<feature type="compositionally biased region" description="Basic and acidic residues" evidence="3">
    <location>
        <begin position="15"/>
        <end position="27"/>
    </location>
</feature>
<feature type="compositionally biased region" description="Low complexity" evidence="3">
    <location>
        <begin position="35"/>
        <end position="57"/>
    </location>
</feature>
<feature type="active site" description="Nucleophile" evidence="2">
    <location>
        <position position="144"/>
    </location>
</feature>
<feature type="active site" evidence="2">
    <location>
        <position position="356"/>
    </location>
</feature>
<feature type="active site" evidence="2">
    <location>
        <position position="358"/>
    </location>
</feature>
<feature type="site" description="Cleavage; by CASP3" evidence="5">
    <location>
        <begin position="63"/>
        <end position="64"/>
    </location>
</feature>
<feature type="modified residue" description="Phosphoserine" evidence="20">
    <location>
        <position position="467"/>
    </location>
</feature>
<feature type="splice variant" id="VSP_056671" description="In isoform 2." evidence="14">
    <location>
        <begin position="1"/>
        <end position="333"/>
    </location>
</feature>
<feature type="sequence variant" id="VAR_085353" description="Found in patients with non-obstructive azoospermia; uncertain significance; decreased expression of MAP1LC3B; increased programmed cell death in spermatogenic cells; dbSNP:rs1216040637." evidence="12">
    <original>R</original>
    <variation>L</variation>
    <location>
        <position position="125"/>
    </location>
</feature>
<feature type="sequence variant" id="VAR_085354" description="Found in patients with non-obstructive azoospermia; uncertain significance; dbSNP:rs145807760." evidence="12">
    <original>V</original>
    <variation>I</variation>
    <location>
        <position position="273"/>
    </location>
</feature>
<feature type="sequence variant" id="VAR_085355" description="Found in patients with non-obstructive azoospermia; uncertain significance; dbSNP:rs1261979779." evidence="12">
    <original>A</original>
    <variation>D</variation>
    <location>
        <position position="295"/>
    </location>
</feature>
<feature type="sequence variant" id="VAR_085356" description="Found in patients with non-obstructive azoospermia; uncertain significance; dbSNP:rs201291151." evidence="12">
    <original>V</original>
    <variation>M</variation>
    <location>
        <position position="395"/>
    </location>
</feature>
<feature type="mutagenesis site" description="Abolishes cleavage by CASP3." evidence="5">
    <original>D</original>
    <variation>A</variation>
    <location>
        <position position="63"/>
    </location>
</feature>
<reference key="1">
    <citation type="journal article" date="2004" name="Nature">
        <title>The DNA sequence and biology of human chromosome 19.</title>
        <authorList>
            <person name="Grimwood J."/>
            <person name="Gordon L.A."/>
            <person name="Olsen A.S."/>
            <person name="Terry A."/>
            <person name="Schmutz J."/>
            <person name="Lamerdin J.E."/>
            <person name="Hellsten U."/>
            <person name="Goodstein D."/>
            <person name="Couronne O."/>
            <person name="Tran-Gyamfi M."/>
            <person name="Aerts A."/>
            <person name="Altherr M."/>
            <person name="Ashworth L."/>
            <person name="Bajorek E."/>
            <person name="Black S."/>
            <person name="Branscomb E."/>
            <person name="Caenepeel S."/>
            <person name="Carrano A.V."/>
            <person name="Caoile C."/>
            <person name="Chan Y.M."/>
            <person name="Christensen M."/>
            <person name="Cleland C.A."/>
            <person name="Copeland A."/>
            <person name="Dalin E."/>
            <person name="Dehal P."/>
            <person name="Denys M."/>
            <person name="Detter J.C."/>
            <person name="Escobar J."/>
            <person name="Flowers D."/>
            <person name="Fotopulos D."/>
            <person name="Garcia C."/>
            <person name="Georgescu A.M."/>
            <person name="Glavina T."/>
            <person name="Gomez M."/>
            <person name="Gonzales E."/>
            <person name="Groza M."/>
            <person name="Hammon N."/>
            <person name="Hawkins T."/>
            <person name="Haydu L."/>
            <person name="Ho I."/>
            <person name="Huang W."/>
            <person name="Israni S."/>
            <person name="Jett J."/>
            <person name="Kadner K."/>
            <person name="Kimball H."/>
            <person name="Kobayashi A."/>
            <person name="Larionov V."/>
            <person name="Leem S.-H."/>
            <person name="Lopez F."/>
            <person name="Lou Y."/>
            <person name="Lowry S."/>
            <person name="Malfatti S."/>
            <person name="Martinez D."/>
            <person name="McCready P.M."/>
            <person name="Medina C."/>
            <person name="Morgan J."/>
            <person name="Nelson K."/>
            <person name="Nolan M."/>
            <person name="Ovcharenko I."/>
            <person name="Pitluck S."/>
            <person name="Pollard M."/>
            <person name="Popkie A.P."/>
            <person name="Predki P."/>
            <person name="Quan G."/>
            <person name="Ramirez L."/>
            <person name="Rash S."/>
            <person name="Retterer J."/>
            <person name="Rodriguez A."/>
            <person name="Rogers S."/>
            <person name="Salamov A."/>
            <person name="Salazar A."/>
            <person name="She X."/>
            <person name="Smith D."/>
            <person name="Slezak T."/>
            <person name="Solovyev V."/>
            <person name="Thayer N."/>
            <person name="Tice H."/>
            <person name="Tsai M."/>
            <person name="Ustaszewska A."/>
            <person name="Vo N."/>
            <person name="Wagner M."/>
            <person name="Wheeler J."/>
            <person name="Wu K."/>
            <person name="Xie G."/>
            <person name="Yang J."/>
            <person name="Dubchak I."/>
            <person name="Furey T.S."/>
            <person name="DeJong P."/>
            <person name="Dickson M."/>
            <person name="Gordon D."/>
            <person name="Eichler E.E."/>
            <person name="Pennacchio L.A."/>
            <person name="Richardson P."/>
            <person name="Stubbs L."/>
            <person name="Rokhsar D.S."/>
            <person name="Myers R.M."/>
            <person name="Rubin E.M."/>
            <person name="Lucas S.M."/>
        </authorList>
    </citation>
    <scope>NUCLEOTIDE SEQUENCE [LARGE SCALE GENOMIC DNA]</scope>
</reference>
<reference key="2">
    <citation type="submission" date="2005-09" db="EMBL/GenBank/DDBJ databases">
        <authorList>
            <person name="Mural R.J."/>
            <person name="Istrail S."/>
            <person name="Sutton G."/>
            <person name="Florea L."/>
            <person name="Halpern A.L."/>
            <person name="Mobarry C.M."/>
            <person name="Lippert R."/>
            <person name="Walenz B."/>
            <person name="Shatkay H."/>
            <person name="Dew I."/>
            <person name="Miller J.R."/>
            <person name="Flanigan M.J."/>
            <person name="Edwards N.J."/>
            <person name="Bolanos R."/>
            <person name="Fasulo D."/>
            <person name="Halldorsson B.V."/>
            <person name="Hannenhalli S."/>
            <person name="Turner R."/>
            <person name="Yooseph S."/>
            <person name="Lu F."/>
            <person name="Nusskern D.R."/>
            <person name="Shue B.C."/>
            <person name="Zheng X.H."/>
            <person name="Zhong F."/>
            <person name="Delcher A.L."/>
            <person name="Huson D.H."/>
            <person name="Kravitz S.A."/>
            <person name="Mouchard L."/>
            <person name="Reinert K."/>
            <person name="Remington K.A."/>
            <person name="Clark A.G."/>
            <person name="Waterman M.S."/>
            <person name="Eichler E.E."/>
            <person name="Adams M.D."/>
            <person name="Hunkapiller M.W."/>
            <person name="Myers E.W."/>
            <person name="Venter J.C."/>
        </authorList>
    </citation>
    <scope>NUCLEOTIDE SEQUENCE [LARGE SCALE GENOMIC DNA]</scope>
</reference>
<reference key="3">
    <citation type="journal article" date="2004" name="Genome Res.">
        <title>The status, quality, and expansion of the NIH full-length cDNA project: the Mammalian Gene Collection (MGC).</title>
        <authorList>
            <consortium name="The MGC Project Team"/>
        </authorList>
    </citation>
    <scope>NUCLEOTIDE SEQUENCE [LARGE SCALE MRNA] (ISOFORMS 1 AND 2)</scope>
    <source>
        <tissue>Lung</tissue>
        <tissue>Ovary</tissue>
        <tissue>Uterus</tissue>
    </source>
</reference>
<reference key="4">
    <citation type="journal article" date="2003" name="J. Biol. Chem.">
        <title>Human autophagins, a family of cysteine proteinases potentially implicated in cell degradation by autophagy.</title>
        <authorList>
            <person name="Marino G."/>
            <person name="Uria J.A."/>
            <person name="Puente X.S."/>
            <person name="Quesada V."/>
            <person name="Bordallo J."/>
            <person name="Lopez-Otin C."/>
        </authorList>
    </citation>
    <scope>RETRACTED PAPER</scope>
    <source>
        <tissue>Fetal liver</tissue>
    </source>
</reference>
<reference key="5">
    <citation type="journal article" date="2019" name="J. Biol. Chem.">
        <authorList>
            <person name="Marino G."/>
            <person name="Uria J.A."/>
            <person name="Puente X.S."/>
            <person name="Quesada V."/>
            <person name="Bordallo J."/>
            <person name="Lopez-Otin C."/>
        </authorList>
    </citation>
    <scope>RETRACTION NOTICE OF PUBMED:12446702</scope>
</reference>
<reference key="6">
    <citation type="journal article" date="2009" name="J. Cell Sci.">
        <title>Caspase cleavage of Atg4D stimulates GABARAP-L1 processing and triggers mitochondrial targeting and apoptosis.</title>
        <authorList>
            <person name="Betin V.M."/>
            <person name="Lane J.D."/>
        </authorList>
    </citation>
    <scope>FUNCTION (CYSTEINE PROTEASE ATG4D; MITOCHONDRIAL)</scope>
    <scope>CLEAVAGE BY CASP3</scope>
    <scope>MUTAGENESIS OF ASP-63</scope>
    <scope>SUBCELLULAR LOCATION</scope>
</reference>
<reference key="7">
    <citation type="journal article" date="2011" name="J. Biol. Chem.">
        <title>Kinetics comparisons of mammalian Atg4 homologues indicate selective preferences toward diverse Atg8 substrates.</title>
        <authorList>
            <person name="Li M."/>
            <person name="Hou Y."/>
            <person name="Wang J."/>
            <person name="Chen X."/>
            <person name="Shao Z.M."/>
            <person name="Yin X.M."/>
        </authorList>
    </citation>
    <scope>FUNCTION</scope>
    <scope>BIOPHYSICOCHEMICAL PROPERTIES</scope>
    <scope>ACTIVITY REGULATION</scope>
</reference>
<reference key="8">
    <citation type="journal article" date="2012" name="Autophagy">
        <title>A cryptic mitochondrial targeting motif in Atg4D links caspase cleavage with mitochondrial import and oxidative stress.</title>
        <authorList>
            <person name="Betin V.M."/>
            <person name="MacVicar T.D."/>
            <person name="Parsons S.F."/>
            <person name="Anstee D.J."/>
            <person name="Lane J.D."/>
        </authorList>
    </citation>
    <scope>FUNCTION (CYSTEINE PROTEASE ATG4D; MITOCHONDRIAL)</scope>
    <scope>CLEAVAGE BY CASP3</scope>
    <scope>SUBCELLULAR LOCATION</scope>
    <scope>DOMAIN</scope>
    <scope>CRYPTIC SIGNAL PEPTIDE</scope>
</reference>
<reference key="9">
    <citation type="journal article" date="2013" name="J. Proteome Res.">
        <title>Toward a comprehensive characterization of a human cancer cell phosphoproteome.</title>
        <authorList>
            <person name="Zhou H."/>
            <person name="Di Palma S."/>
            <person name="Preisinger C."/>
            <person name="Peng M."/>
            <person name="Polat A.N."/>
            <person name="Heck A.J."/>
            <person name="Mohammed S."/>
        </authorList>
    </citation>
    <scope>PHOSPHORYLATION [LARGE SCALE ANALYSIS] AT SER-467</scope>
    <scope>IDENTIFICATION BY MASS SPECTROMETRY [LARGE SCALE ANALYSIS]</scope>
    <source>
        <tissue>Cervix carcinoma</tissue>
        <tissue>Erythroleukemia</tissue>
    </source>
</reference>
<reference key="10">
    <citation type="journal article" date="2018" name="Autophagy">
        <title>Delipidation of mammalian Atg8-family proteins by each of the four ATG4 proteases.</title>
        <authorList>
            <person name="Kauffman K.J."/>
            <person name="Yu S."/>
            <person name="Jin J."/>
            <person name="Mugo B."/>
            <person name="Nguyen N."/>
            <person name="O'Brien A."/>
            <person name="Nag S."/>
            <person name="Lystad A.H."/>
            <person name="Melia T.J."/>
        </authorList>
    </citation>
    <scope>FUNCTION</scope>
    <scope>CATALYTIC ACTIVITY</scope>
</reference>
<reference key="11">
    <citation type="journal article" date="2019" name="Autophagy">
        <title>Redundancy of human ATG4 protease isoforms in autophagy and LC3/GABARAP processing revealed in cells.</title>
        <authorList>
            <person name="Agrotis A."/>
            <person name="Pengo N."/>
            <person name="Burden J.J."/>
            <person name="Ketteler R."/>
        </authorList>
    </citation>
    <scope>FUNCTION</scope>
</reference>
<reference key="12">
    <citation type="journal article" date="2021" name="Mol. Cell">
        <title>ATG4 family proteins drive phagophore growth independently of the LC3/GABARAP lipidation system.</title>
        <authorList>
            <person name="Nguyen T.N."/>
            <person name="Padman B.S."/>
            <person name="Zellner S."/>
            <person name="Khuu G."/>
            <person name="Uoselis L."/>
            <person name="Lam W.K."/>
            <person name="Skulsuppaisarn M."/>
            <person name="Lindblom R.S.J."/>
            <person name="Watts E.M."/>
            <person name="Behrends C."/>
            <person name="Lazarou M."/>
        </authorList>
    </citation>
    <scope>FUNCTION</scope>
</reference>
<reference key="13">
    <citation type="journal article" date="2021" name="Mol. Cell">
        <title>Non-canonical autophagy drives alternative ATG8 conjugation to phosphatidylserine.</title>
        <authorList>
            <person name="Durgan J."/>
            <person name="Lystad A.H."/>
            <person name="Sloan K."/>
            <person name="Carlsson S.R."/>
            <person name="Wilson M.I."/>
            <person name="Marcassa E."/>
            <person name="Ulferts R."/>
            <person name="Webster J."/>
            <person name="Lopez-Clavijo A.F."/>
            <person name="Wakelam M.J."/>
            <person name="Beale R."/>
            <person name="Simonsen A."/>
            <person name="Oxley D."/>
            <person name="Florey O."/>
        </authorList>
    </citation>
    <scope>FUNCTION</scope>
    <scope>CATALYTIC ACTIVITY</scope>
</reference>
<reference key="14">
    <citation type="journal article" date="2021" name="Clin. Genet.">
        <title>Pathogenic variants of ATG4D in infertile men with non-obstructive azoospermia identified using whole-exome sequencing.</title>
        <authorList>
            <person name="Sha Y."/>
            <person name="Liu W."/>
            <person name="Wei X."/>
            <person name="Zhu X."/>
            <person name="Tang B."/>
            <person name="Zhang X."/>
            <person name="Yang X."/>
            <person name="Wang Y."/>
            <person name="Wang X."/>
        </authorList>
    </citation>
    <scope>VARIANTS LEU-125; ILE-273; ASP-295 AND MET-395</scope>
    <scope>CHARACTERIZATION OF VARIANT LEU-125</scope>
    <scope>TISSUE SPECIFICITY</scope>
</reference>
<comment type="function">
    <molecule>Cysteine protease ATG4D</molecule>
    <text evidence="1 2 6 8 9 10 11">Cysteine protease that plays a key role in autophagy by mediating both proteolytic activation and delipidation of ATG8 family proteins (PubMed:21177865, PubMed:29458288, PubMed:30661429). The protease activity is required for proteolytic activation of ATG8 family proteins: cleaves the C-terminal amino acid of ATG8 proteins MAP1LC3 and GABARAPL2, to reveal a C-terminal glycine (PubMed:21177865). Exposure of the glycine at the C-terminus is essential for ATG8 proteins conjugation to phosphatidylethanolamine (PE) and insertion to membranes, which is necessary for autophagy (By similarity). In addition to the protease activity, also mediates delipidation of ATG8 family proteins (PubMed:29458288, PubMed:33909989). Catalyzes delipidation of PE-conjugated forms of ATG8 proteins during macroautophagy (PubMed:29458288, PubMed:33909989). Also involved in non-canonical autophagy, a parallel pathway involving conjugation of ATG8 proteins to single membranes at endolysosomal compartments, by catalyzing delipidation of ATG8 proteins conjugated to phosphatidylserine (PS) (PubMed:33909989). ATG4D plays a role in the autophagy-mediated neuronal homeostasis in the central nervous system (By similarity). Compared to other members of the family (ATG4A, ATG4B or ATG4C), constitutes the major protein for the delipidation activity, while it promotes weak proteolytic activation of ATG8 proteins (By similarity). Involved in phagophore growth during mitophagy independently of its protease activity and of ATG8 proteins: acts by regulating ATG9A trafficking to mitochondria and promoting phagophore-endoplasmic reticulum contacts during the lipid transfer phase of mitophagy (PubMed:33773106).</text>
</comment>
<comment type="function">
    <molecule>Cysteine protease ATG4D, mitochondrial</molecule>
    <text evidence="5 7">Plays a role as an autophagy regulator that links mitochondrial dysfunction with apoptosis. The mitochondrial import of ATG4D during cellular stress and differentiation may play important roles in the regulation of mitochondrial physiology, ROS, mitophagy and cell viability.</text>
</comment>
<comment type="catalytic activity">
    <reaction evidence="8 11">
        <text>[protein]-C-terminal L-amino acid-glycyl-phosphatidylethanolamide + H2O = [protein]-C-terminal L-amino acid-glycine + a 1,2-diacyl-sn-glycero-3-phosphoethanolamine</text>
        <dbReference type="Rhea" id="RHEA:67548"/>
        <dbReference type="Rhea" id="RHEA-COMP:17323"/>
        <dbReference type="Rhea" id="RHEA-COMP:17324"/>
        <dbReference type="ChEBI" id="CHEBI:15377"/>
        <dbReference type="ChEBI" id="CHEBI:64612"/>
        <dbReference type="ChEBI" id="CHEBI:172940"/>
        <dbReference type="ChEBI" id="CHEBI:172941"/>
    </reaction>
    <physiologicalReaction direction="left-to-right" evidence="8 11">
        <dbReference type="Rhea" id="RHEA:67549"/>
    </physiologicalReaction>
</comment>
<comment type="catalytic activity">
    <reaction evidence="11">
        <text>[protein]-C-terminal L-amino acid-glycyl-phosphatidylserine + H2O = [protein]-C-terminal L-amino acid-glycine + a 1,2-diacyl-sn-glycero-3-phospho-L-serine</text>
        <dbReference type="Rhea" id="RHEA:67576"/>
        <dbReference type="Rhea" id="RHEA-COMP:17324"/>
        <dbReference type="Rhea" id="RHEA-COMP:17326"/>
        <dbReference type="ChEBI" id="CHEBI:15377"/>
        <dbReference type="ChEBI" id="CHEBI:57262"/>
        <dbReference type="ChEBI" id="CHEBI:172940"/>
        <dbReference type="ChEBI" id="CHEBI:172942"/>
    </reaction>
    <physiologicalReaction direction="left-to-right" evidence="11">
        <dbReference type="Rhea" id="RHEA:67577"/>
    </physiologicalReaction>
</comment>
<comment type="activity regulation">
    <text evidence="6">Inhibited by N-ethylmaleimide.</text>
</comment>
<comment type="biophysicochemical properties">
    <kinetics>
        <KM evidence="6">13.1 uM for MAP1LC3B</KM>
        <KM evidence="6">7.2 uM for GABARAPL2</KM>
    </kinetics>
</comment>
<comment type="subcellular location">
    <molecule>Cysteine protease ATG4D</molecule>
    <subcellularLocation>
        <location evidence="5">Cytoplasm</location>
    </subcellularLocation>
</comment>
<comment type="subcellular location">
    <molecule>Cysteine protease ATG4D, mitochondrial</molecule>
    <subcellularLocation>
        <location evidence="5">Cytoplasm</location>
    </subcellularLocation>
    <subcellularLocation>
        <location evidence="5 7">Mitochondrion matrix</location>
    </subcellularLocation>
    <text evidence="7">Imported into mitochondrial matrix after cleavage by CASP3 during oxidative stress and cell death.</text>
</comment>
<comment type="alternative products">
    <event type="alternative splicing"/>
    <isoform>
        <id>Q86TL0-1</id>
        <name>1</name>
        <sequence type="displayed"/>
    </isoform>
    <isoform>
        <id>Q86TL0-2</id>
        <name>2</name>
        <sequence type="described" ref="VSP_056671"/>
    </isoform>
</comment>
<comment type="tissue specificity">
    <text evidence="12">Widely expressed in testis.</text>
</comment>
<comment type="domain">
    <text evidence="7">The cryptic mitochondrial transit peptide is revealed after cleavage by caspase upon oxidative stress and cell death (PubMed:22441018). It acts then as a functional transit peptide, and allows the import of the cleaved protein into the mitochondria (PubMed:22441018).</text>
</comment>
<comment type="PTM">
    <text evidence="5 7">Cleaved by CASP3 during apoptosis which leads to increased activity (PubMed:19549685, PubMed:22441018). The cleavage by CASP3 reveals a cryptic mitochondrial targeting sequence immediately downstream of their canonical caspase cleavage sites which leads to mitochondrial import of the protein (PubMed:19549685, PubMed:22441018).</text>
</comment>
<comment type="similarity">
    <text evidence="17">Belongs to the peptidase C54 family.</text>
</comment>
<comment type="caution">
    <text evidence="4 18">A paper describing ATG4D tissue expression has been retracted, due to concerns of image duplication in some of the figures.</text>
</comment>
<sequence>MNSVSPAAAQYRSSSPEDARRRPEARRPRGPRGPDPNGLGPSGASGPALGSPGAGPSEPDEVDKFKAKFLTAWNNVKYGWVVKSRTSFSKISSIHLCGRRYRFEGEGDIQRFQRDFVSRLWLTYRRDFPPLPGGCLTSDCGWGCMLRSGQMMLAQGLLLHFLPRDWTWAEGMGLGPPELSGSASPSRYHGPARWMPPRWAQGAPELEQERRHRQIVSWFADHPRAPFGLHRLVELGQSSGKKAGDWYGPSLVAHILRKAVESCSDVTRLVVYVSQDCTVYKADVARLVARPDPTAEWKSVVILVPVRLGGETLNPVYVPCVKELLRCELCLGIMGGKPRHSLYFIGYQDDFLLYLDPHYCQPTVDVSQADFPLESFHCTSPRKMAFAKMDPSCTVGFYAGDRKEFETLCSELTRVLSSSSATERYPMFTLAEGHAQDHSLDDLCSQLAQPTLRLPRTGRLLRAKRPSSEDFVFL</sequence>
<gene>
    <name evidence="15 19" type="primary">ATG4D</name>
    <name evidence="19" type="synonym">APG4D</name>
    <name evidence="19" type="synonym">AUTL4</name>
</gene>
<dbReference type="EC" id="3.4.22.-" evidence="6"/>
<dbReference type="EMBL" id="AJ312332">
    <property type="protein sequence ID" value="CAC85951.1"/>
    <property type="molecule type" value="mRNA"/>
</dbReference>
<dbReference type="EMBL" id="AC011461">
    <property type="status" value="NOT_ANNOTATED_CDS"/>
    <property type="molecule type" value="Genomic_DNA"/>
</dbReference>
<dbReference type="EMBL" id="CH471106">
    <property type="protein sequence ID" value="EAW84116.1"/>
    <property type="molecule type" value="Genomic_DNA"/>
</dbReference>
<dbReference type="EMBL" id="BC007639">
    <property type="protein sequence ID" value="AAH07639.1"/>
    <property type="molecule type" value="mRNA"/>
</dbReference>
<dbReference type="EMBL" id="BC016845">
    <property type="protein sequence ID" value="AAH16845.1"/>
    <property type="molecule type" value="mRNA"/>
</dbReference>
<dbReference type="EMBL" id="BC068992">
    <property type="protein sequence ID" value="AAH68992.1"/>
    <property type="molecule type" value="mRNA"/>
</dbReference>
<dbReference type="CCDS" id="CCDS12241.1">
    <molecule id="Q86TL0-1"/>
</dbReference>
<dbReference type="RefSeq" id="NP_001268433.1">
    <property type="nucleotide sequence ID" value="NM_001281504.1"/>
</dbReference>
<dbReference type="RefSeq" id="NP_116274.3">
    <molecule id="Q86TL0-1"/>
    <property type="nucleotide sequence ID" value="NM_032885.5"/>
</dbReference>
<dbReference type="RefSeq" id="XP_054178417.1">
    <molecule id="Q86TL0-1"/>
    <property type="nucleotide sequence ID" value="XM_054322442.1"/>
</dbReference>
<dbReference type="SMR" id="Q86TL0"/>
<dbReference type="BioGRID" id="124401">
    <property type="interactions" value="14"/>
</dbReference>
<dbReference type="FunCoup" id="Q86TL0">
    <property type="interactions" value="1348"/>
</dbReference>
<dbReference type="IntAct" id="Q86TL0">
    <property type="interactions" value="136"/>
</dbReference>
<dbReference type="STRING" id="9606.ENSP00000311318"/>
<dbReference type="MEROPS" id="C54.005"/>
<dbReference type="TCDB" id="9.A.15.2.1">
    <property type="family name" value="the autophagy-related phagophore-formation transporter (apt) family"/>
</dbReference>
<dbReference type="GlyGen" id="Q86TL0">
    <property type="glycosylation" value="1 site, 1 O-linked glycan (1 site)"/>
</dbReference>
<dbReference type="iPTMnet" id="Q86TL0"/>
<dbReference type="PhosphoSitePlus" id="Q86TL0"/>
<dbReference type="BioMuta" id="ATG4D"/>
<dbReference type="DMDM" id="61211809"/>
<dbReference type="jPOST" id="Q86TL0"/>
<dbReference type="MassIVE" id="Q86TL0"/>
<dbReference type="PaxDb" id="9606-ENSP00000311318"/>
<dbReference type="PeptideAtlas" id="Q86TL0"/>
<dbReference type="ProteomicsDB" id="69710">
    <molecule id="Q86TL0-1"/>
</dbReference>
<dbReference type="ProteomicsDB" id="75778"/>
<dbReference type="Antibodypedia" id="25362">
    <property type="antibodies" value="583 antibodies from 37 providers"/>
</dbReference>
<dbReference type="DNASU" id="84971"/>
<dbReference type="Ensembl" id="ENST00000309469.9">
    <molecule id="Q86TL0-1"/>
    <property type="protein sequence ID" value="ENSP00000311318.3"/>
    <property type="gene ID" value="ENSG00000130734.10"/>
</dbReference>
<dbReference type="GeneID" id="84971"/>
<dbReference type="KEGG" id="hsa:84971"/>
<dbReference type="MANE-Select" id="ENST00000309469.9">
    <property type="protein sequence ID" value="ENSP00000311318.3"/>
    <property type="RefSeq nucleotide sequence ID" value="NM_032885.6"/>
    <property type="RefSeq protein sequence ID" value="NP_116274.3"/>
</dbReference>
<dbReference type="UCSC" id="uc002mov.5">
    <molecule id="Q86TL0-1"/>
    <property type="organism name" value="human"/>
</dbReference>
<dbReference type="AGR" id="HGNC:20789"/>
<dbReference type="CTD" id="84971"/>
<dbReference type="DisGeNET" id="84971"/>
<dbReference type="GeneCards" id="ATG4D"/>
<dbReference type="HGNC" id="HGNC:20789">
    <property type="gene designation" value="ATG4D"/>
</dbReference>
<dbReference type="HPA" id="ENSG00000130734">
    <property type="expression patterns" value="Low tissue specificity"/>
</dbReference>
<dbReference type="MIM" id="611340">
    <property type="type" value="gene"/>
</dbReference>
<dbReference type="neXtProt" id="NX_Q86TL0"/>
<dbReference type="OpenTargets" id="ENSG00000130734"/>
<dbReference type="PharmGKB" id="PA134907475"/>
<dbReference type="VEuPathDB" id="HostDB:ENSG00000130734"/>
<dbReference type="eggNOG" id="KOG2674">
    <property type="taxonomic scope" value="Eukaryota"/>
</dbReference>
<dbReference type="GeneTree" id="ENSGT00530000063000"/>
<dbReference type="HOGENOM" id="CLU_021259_3_2_1"/>
<dbReference type="InParanoid" id="Q86TL0"/>
<dbReference type="OMA" id="MPRDWAW"/>
<dbReference type="OrthoDB" id="2960936at2759"/>
<dbReference type="PAN-GO" id="Q86TL0">
    <property type="GO annotations" value="0 GO annotations based on evolutionary models"/>
</dbReference>
<dbReference type="PhylomeDB" id="Q86TL0"/>
<dbReference type="TreeFam" id="TF314847"/>
<dbReference type="PathwayCommons" id="Q86TL0"/>
<dbReference type="Reactome" id="R-HSA-1632852">
    <property type="pathway name" value="Macroautophagy"/>
</dbReference>
<dbReference type="SABIO-RK" id="Q86TL0"/>
<dbReference type="SignaLink" id="Q86TL0"/>
<dbReference type="BioGRID-ORCS" id="84971">
    <property type="hits" value="10 hits in 1152 CRISPR screens"/>
</dbReference>
<dbReference type="ChiTaRS" id="ATG4D">
    <property type="organism name" value="human"/>
</dbReference>
<dbReference type="GenomeRNAi" id="84971"/>
<dbReference type="Pharos" id="Q86TL0">
    <property type="development level" value="Tbio"/>
</dbReference>
<dbReference type="PRO" id="PR:Q86TL0"/>
<dbReference type="Proteomes" id="UP000005640">
    <property type="component" value="Chromosome 19"/>
</dbReference>
<dbReference type="RNAct" id="Q86TL0">
    <property type="molecule type" value="protein"/>
</dbReference>
<dbReference type="Bgee" id="ENSG00000130734">
    <property type="expression patterns" value="Expressed in mucosa of transverse colon and 97 other cell types or tissues"/>
</dbReference>
<dbReference type="ExpressionAtlas" id="Q86TL0">
    <property type="expression patterns" value="baseline and differential"/>
</dbReference>
<dbReference type="GO" id="GO:0005737">
    <property type="term" value="C:cytoplasm"/>
    <property type="evidence" value="ECO:0000318"/>
    <property type="project" value="GO_Central"/>
</dbReference>
<dbReference type="GO" id="GO:0005759">
    <property type="term" value="C:mitochondrial matrix"/>
    <property type="evidence" value="ECO:0007669"/>
    <property type="project" value="UniProtKB-SubCell"/>
</dbReference>
<dbReference type="GO" id="GO:0005739">
    <property type="term" value="C:mitochondrion"/>
    <property type="evidence" value="ECO:0000314"/>
    <property type="project" value="HPA"/>
</dbReference>
<dbReference type="GO" id="GO:0005654">
    <property type="term" value="C:nucleoplasm"/>
    <property type="evidence" value="ECO:0000314"/>
    <property type="project" value="HPA"/>
</dbReference>
<dbReference type="GO" id="GO:0004197">
    <property type="term" value="F:cysteine-type endopeptidase activity"/>
    <property type="evidence" value="ECO:0000318"/>
    <property type="project" value="GO_Central"/>
</dbReference>
<dbReference type="GO" id="GO:0070004">
    <property type="term" value="F:cysteine-type exopeptidase activity"/>
    <property type="evidence" value="ECO:0000314"/>
    <property type="project" value="UniProt"/>
</dbReference>
<dbReference type="GO" id="GO:0008234">
    <property type="term" value="F:cysteine-type peptidase activity"/>
    <property type="evidence" value="ECO:0000314"/>
    <property type="project" value="UniProtKB"/>
</dbReference>
<dbReference type="GO" id="GO:0019786">
    <property type="term" value="F:protein-phosphatidylethanolamide deconjugating activity"/>
    <property type="evidence" value="ECO:0000318"/>
    <property type="project" value="GO_Central"/>
</dbReference>
<dbReference type="GO" id="GO:0035973">
    <property type="term" value="P:aggrephagy"/>
    <property type="evidence" value="ECO:0000318"/>
    <property type="project" value="GO_Central"/>
</dbReference>
<dbReference type="GO" id="GO:0006915">
    <property type="term" value="P:apoptotic process"/>
    <property type="evidence" value="ECO:0007669"/>
    <property type="project" value="UniProtKB-KW"/>
</dbReference>
<dbReference type="GO" id="GO:0000045">
    <property type="term" value="P:autophagosome assembly"/>
    <property type="evidence" value="ECO:0000314"/>
    <property type="project" value="UniProt"/>
</dbReference>
<dbReference type="GO" id="GO:0006914">
    <property type="term" value="P:autophagy"/>
    <property type="evidence" value="ECO:0000314"/>
    <property type="project" value="UniProtKB"/>
</dbReference>
<dbReference type="GO" id="GO:0000423">
    <property type="term" value="P:mitophagy"/>
    <property type="evidence" value="ECO:0000315"/>
    <property type="project" value="UniProtKB"/>
</dbReference>
<dbReference type="GO" id="GO:0034727">
    <property type="term" value="P:piecemeal microautophagy of the nucleus"/>
    <property type="evidence" value="ECO:0000318"/>
    <property type="project" value="GO_Central"/>
</dbReference>
<dbReference type="GO" id="GO:0051697">
    <property type="term" value="P:protein delipidation"/>
    <property type="evidence" value="ECO:0000314"/>
    <property type="project" value="UniProtKB"/>
</dbReference>
<dbReference type="GO" id="GO:0034497">
    <property type="term" value="P:protein localization to phagophore assembly site"/>
    <property type="evidence" value="ECO:0000315"/>
    <property type="project" value="UniProtKB"/>
</dbReference>
<dbReference type="GO" id="GO:0016485">
    <property type="term" value="P:protein processing"/>
    <property type="evidence" value="ECO:0000318"/>
    <property type="project" value="GO_Central"/>
</dbReference>
<dbReference type="GO" id="GO:0015031">
    <property type="term" value="P:protein transport"/>
    <property type="evidence" value="ECO:0007669"/>
    <property type="project" value="UniProtKB-KW"/>
</dbReference>
<dbReference type="GO" id="GO:0006508">
    <property type="term" value="P:proteolysis"/>
    <property type="evidence" value="ECO:0000314"/>
    <property type="project" value="UniProtKB"/>
</dbReference>
<dbReference type="InterPro" id="IPR038765">
    <property type="entry name" value="Papain-like_cys_pep_sf"/>
</dbReference>
<dbReference type="InterPro" id="IPR005078">
    <property type="entry name" value="Peptidase_C54"/>
</dbReference>
<dbReference type="InterPro" id="IPR046792">
    <property type="entry name" value="Peptidase_C54_cat"/>
</dbReference>
<dbReference type="PANTHER" id="PTHR22624">
    <property type="entry name" value="CYSTEINE PROTEASE ATG4"/>
    <property type="match status" value="1"/>
</dbReference>
<dbReference type="PANTHER" id="PTHR22624:SF36">
    <property type="entry name" value="CYSTEINE PROTEASE ATG4D"/>
    <property type="match status" value="1"/>
</dbReference>
<dbReference type="Pfam" id="PF03416">
    <property type="entry name" value="Peptidase_C54"/>
    <property type="match status" value="1"/>
</dbReference>
<dbReference type="SUPFAM" id="SSF54001">
    <property type="entry name" value="Cysteine proteinases"/>
    <property type="match status" value="1"/>
</dbReference>